<comment type="function">
    <text evidence="1">Involved in the de novo purine biosynthesis. Catalyzes the transfer of formate to 5-phospho-ribosyl-glycinamide (GAR), producing 5-phospho-ribosyl-N-formylglycinamide (FGAR). Formate is provided by PurU via hydrolysis of 10-formyl-tetrahydrofolate.</text>
</comment>
<comment type="catalytic activity">
    <reaction evidence="1">
        <text>N(1)-(5-phospho-beta-D-ribosyl)glycinamide + formate + ATP = N(2)-formyl-N(1)-(5-phospho-beta-D-ribosyl)glycinamide + ADP + phosphate + H(+)</text>
        <dbReference type="Rhea" id="RHEA:24829"/>
        <dbReference type="ChEBI" id="CHEBI:15378"/>
        <dbReference type="ChEBI" id="CHEBI:15740"/>
        <dbReference type="ChEBI" id="CHEBI:30616"/>
        <dbReference type="ChEBI" id="CHEBI:43474"/>
        <dbReference type="ChEBI" id="CHEBI:143788"/>
        <dbReference type="ChEBI" id="CHEBI:147286"/>
        <dbReference type="ChEBI" id="CHEBI:456216"/>
        <dbReference type="EC" id="6.3.1.21"/>
    </reaction>
    <physiologicalReaction direction="left-to-right" evidence="1">
        <dbReference type="Rhea" id="RHEA:24830"/>
    </physiologicalReaction>
</comment>
<comment type="pathway">
    <text evidence="1">Purine metabolism; IMP biosynthesis via de novo pathway; N(2)-formyl-N(1)-(5-phospho-D-ribosyl)glycinamide from N(1)-(5-phospho-D-ribosyl)glycinamide (formate route): step 1/1.</text>
</comment>
<comment type="subunit">
    <text evidence="1">Homodimer.</text>
</comment>
<comment type="similarity">
    <text evidence="1">Belongs to the PurK/PurT family.</text>
</comment>
<protein>
    <recommendedName>
        <fullName evidence="1">Formate-dependent phosphoribosylglycinamide formyltransferase</fullName>
        <ecNumber evidence="1">6.3.1.21</ecNumber>
    </recommendedName>
    <alternativeName>
        <fullName evidence="1">5'-phosphoribosylglycinamide transformylase 2</fullName>
    </alternativeName>
    <alternativeName>
        <fullName evidence="1">Formate-dependent GAR transformylase</fullName>
    </alternativeName>
    <alternativeName>
        <fullName evidence="1">GAR transformylase 2</fullName>
        <shortName evidence="1">GART 2</shortName>
    </alternativeName>
    <alternativeName>
        <fullName evidence="1">Non-folate glycinamide ribonucleotide transformylase</fullName>
    </alternativeName>
    <alternativeName>
        <fullName evidence="1">Phosphoribosylglycinamide formyltransferase 2</fullName>
    </alternativeName>
</protein>
<evidence type="ECO:0000255" key="1">
    <source>
        <dbReference type="HAMAP-Rule" id="MF_01643"/>
    </source>
</evidence>
<accession>Q8U3M7</accession>
<sequence>MIKLRDELGTATTDSAQKILLLGSGELGKEIAIEAQRLGVEVVAVDRYANAPAMQVAHRSYVGNMMDKDFLWSVVEREKPDAIIPEIEAINLDALFEFEKEGYFVVPNAKATWIAMHRERLRETLVKEAKVPTSRYMYATTLDELYEACEKIGYPCHTKAIMSSSGKGSYFVRGPEDIPKAWEEAKTKARGSAEKIIVEEHIDFDVEITELAVRHFDENGEIVTTFPKPVGHYQIDGDYHASWQPAEISEKAEREVYRIAKRITDVLGGLGLFGVEMFVKGDKVWANEVSPRPHDTGMVTLASHPPGFSEFGLHLRAVLGLPIPGEWVDGYRLFPMLIPAATHVIKAKVSGYSPRFRGLAKALSVPNATIRLFGKPEAYPGRRLGVVLAWDKDVQEAKKRAEMVAHMIELRTRSSDWHSQDYEKRKHLL</sequence>
<reference key="1">
    <citation type="journal article" date="1999" name="Genetics">
        <title>Divergence of the hyperthermophilic archaea Pyrococcus furiosus and P. horikoshii inferred from complete genomic sequences.</title>
        <authorList>
            <person name="Maeder D.L."/>
            <person name="Weiss R.B."/>
            <person name="Dunn D.M."/>
            <person name="Cherry J.L."/>
            <person name="Gonzalez J.M."/>
            <person name="DiRuggiero J."/>
            <person name="Robb F.T."/>
        </authorList>
    </citation>
    <scope>NUCLEOTIDE SEQUENCE [LARGE SCALE GENOMIC DNA]</scope>
    <source>
        <strain>ATCC 43587 / DSM 3638 / JCM 8422 / Vc1</strain>
    </source>
</reference>
<dbReference type="EC" id="6.3.1.21" evidence="1"/>
<dbReference type="EMBL" id="AE009950">
    <property type="protein sequence ID" value="AAL80554.1"/>
    <property type="molecule type" value="Genomic_DNA"/>
</dbReference>
<dbReference type="RefSeq" id="WP_011011545.1">
    <property type="nucleotide sequence ID" value="NZ_CP023154.1"/>
</dbReference>
<dbReference type="SMR" id="Q8U3M7"/>
<dbReference type="STRING" id="186497.PF0430"/>
<dbReference type="PaxDb" id="186497-PF0430"/>
<dbReference type="GeneID" id="41712226"/>
<dbReference type="KEGG" id="pfu:PF0430"/>
<dbReference type="PATRIC" id="fig|186497.12.peg.447"/>
<dbReference type="eggNOG" id="arCOG01598">
    <property type="taxonomic scope" value="Archaea"/>
</dbReference>
<dbReference type="HOGENOM" id="CLU_011534_1_3_2"/>
<dbReference type="OrthoDB" id="9299at2157"/>
<dbReference type="PhylomeDB" id="Q8U3M7"/>
<dbReference type="UniPathway" id="UPA00074">
    <property type="reaction ID" value="UER00127"/>
</dbReference>
<dbReference type="Proteomes" id="UP000001013">
    <property type="component" value="Chromosome"/>
</dbReference>
<dbReference type="GO" id="GO:0005829">
    <property type="term" value="C:cytosol"/>
    <property type="evidence" value="ECO:0007669"/>
    <property type="project" value="TreeGrafter"/>
</dbReference>
<dbReference type="GO" id="GO:0005524">
    <property type="term" value="F:ATP binding"/>
    <property type="evidence" value="ECO:0007669"/>
    <property type="project" value="UniProtKB-UniRule"/>
</dbReference>
<dbReference type="GO" id="GO:0000287">
    <property type="term" value="F:magnesium ion binding"/>
    <property type="evidence" value="ECO:0007669"/>
    <property type="project" value="InterPro"/>
</dbReference>
<dbReference type="GO" id="GO:0043815">
    <property type="term" value="F:phosphoribosylglycinamide formyltransferase 2 activity"/>
    <property type="evidence" value="ECO:0007669"/>
    <property type="project" value="UniProtKB-UniRule"/>
</dbReference>
<dbReference type="GO" id="GO:0004644">
    <property type="term" value="F:phosphoribosylglycinamide formyltransferase activity"/>
    <property type="evidence" value="ECO:0007669"/>
    <property type="project" value="InterPro"/>
</dbReference>
<dbReference type="GO" id="GO:0006189">
    <property type="term" value="P:'de novo' IMP biosynthetic process"/>
    <property type="evidence" value="ECO:0007669"/>
    <property type="project" value="UniProtKB-UniRule"/>
</dbReference>
<dbReference type="FunFam" id="3.30.1490.20:FF:000013">
    <property type="entry name" value="Formate-dependent phosphoribosylglycinamide formyltransferase"/>
    <property type="match status" value="1"/>
</dbReference>
<dbReference type="FunFam" id="3.30.470.20:FF:000035">
    <property type="entry name" value="Formate-dependent phosphoribosylglycinamide formyltransferase"/>
    <property type="match status" value="1"/>
</dbReference>
<dbReference type="FunFam" id="3.40.50.20:FF:000022">
    <property type="entry name" value="Formate-dependent phosphoribosylglycinamide formyltransferase"/>
    <property type="match status" value="1"/>
</dbReference>
<dbReference type="Gene3D" id="3.40.50.20">
    <property type="match status" value="1"/>
</dbReference>
<dbReference type="Gene3D" id="3.30.1490.20">
    <property type="entry name" value="ATP-grasp fold, A domain"/>
    <property type="match status" value="1"/>
</dbReference>
<dbReference type="Gene3D" id="3.30.470.20">
    <property type="entry name" value="ATP-grasp fold, B domain"/>
    <property type="match status" value="1"/>
</dbReference>
<dbReference type="HAMAP" id="MF_01643">
    <property type="entry name" value="PurT"/>
    <property type="match status" value="1"/>
</dbReference>
<dbReference type="InterPro" id="IPR011761">
    <property type="entry name" value="ATP-grasp"/>
</dbReference>
<dbReference type="InterPro" id="IPR003135">
    <property type="entry name" value="ATP-grasp_carboxylate-amine"/>
</dbReference>
<dbReference type="InterPro" id="IPR013815">
    <property type="entry name" value="ATP_grasp_subdomain_1"/>
</dbReference>
<dbReference type="InterPro" id="IPR016185">
    <property type="entry name" value="PreATP-grasp_dom_sf"/>
</dbReference>
<dbReference type="InterPro" id="IPR005862">
    <property type="entry name" value="PurT"/>
</dbReference>
<dbReference type="InterPro" id="IPR054350">
    <property type="entry name" value="PurT/PurK_preATP-grasp"/>
</dbReference>
<dbReference type="InterPro" id="IPR048740">
    <property type="entry name" value="PurT_C"/>
</dbReference>
<dbReference type="InterPro" id="IPR011054">
    <property type="entry name" value="Rudment_hybrid_motif"/>
</dbReference>
<dbReference type="NCBIfam" id="NF006766">
    <property type="entry name" value="PRK09288.1"/>
    <property type="match status" value="1"/>
</dbReference>
<dbReference type="NCBIfam" id="TIGR01142">
    <property type="entry name" value="purT"/>
    <property type="match status" value="1"/>
</dbReference>
<dbReference type="PANTHER" id="PTHR43055">
    <property type="entry name" value="FORMATE-DEPENDENT PHOSPHORIBOSYLGLYCINAMIDE FORMYLTRANSFERASE"/>
    <property type="match status" value="1"/>
</dbReference>
<dbReference type="PANTHER" id="PTHR43055:SF1">
    <property type="entry name" value="FORMATE-DEPENDENT PHOSPHORIBOSYLGLYCINAMIDE FORMYLTRANSFERASE"/>
    <property type="match status" value="1"/>
</dbReference>
<dbReference type="Pfam" id="PF02222">
    <property type="entry name" value="ATP-grasp"/>
    <property type="match status" value="1"/>
</dbReference>
<dbReference type="Pfam" id="PF21244">
    <property type="entry name" value="PurT_C"/>
    <property type="match status" value="1"/>
</dbReference>
<dbReference type="Pfam" id="PF22660">
    <property type="entry name" value="RS_preATP-grasp-like"/>
    <property type="match status" value="1"/>
</dbReference>
<dbReference type="SUPFAM" id="SSF56059">
    <property type="entry name" value="Glutathione synthetase ATP-binding domain-like"/>
    <property type="match status" value="1"/>
</dbReference>
<dbReference type="SUPFAM" id="SSF52440">
    <property type="entry name" value="PreATP-grasp domain"/>
    <property type="match status" value="1"/>
</dbReference>
<dbReference type="SUPFAM" id="SSF51246">
    <property type="entry name" value="Rudiment single hybrid motif"/>
    <property type="match status" value="1"/>
</dbReference>
<dbReference type="PROSITE" id="PS50975">
    <property type="entry name" value="ATP_GRASP"/>
    <property type="match status" value="1"/>
</dbReference>
<gene>
    <name evidence="1" type="primary">purT</name>
    <name type="ordered locus">PF0430</name>
</gene>
<organism>
    <name type="scientific">Pyrococcus furiosus (strain ATCC 43587 / DSM 3638 / JCM 8422 / Vc1)</name>
    <dbReference type="NCBI Taxonomy" id="186497"/>
    <lineage>
        <taxon>Archaea</taxon>
        <taxon>Methanobacteriati</taxon>
        <taxon>Methanobacteriota</taxon>
        <taxon>Thermococci</taxon>
        <taxon>Thermococcales</taxon>
        <taxon>Thermococcaceae</taxon>
        <taxon>Pyrococcus</taxon>
    </lineage>
</organism>
<proteinExistence type="inferred from homology"/>
<name>PURT_PYRFU</name>
<feature type="chain" id="PRO_0000319284" description="Formate-dependent phosphoribosylglycinamide formyltransferase">
    <location>
        <begin position="1"/>
        <end position="429"/>
    </location>
</feature>
<feature type="domain" description="ATP-grasp" evidence="1">
    <location>
        <begin position="123"/>
        <end position="319"/>
    </location>
</feature>
<feature type="binding site" evidence="1">
    <location>
        <begin position="26"/>
        <end position="27"/>
    </location>
    <ligand>
        <name>N(1)-(5-phospho-beta-D-ribosyl)glycinamide</name>
        <dbReference type="ChEBI" id="CHEBI:143788"/>
    </ligand>
</feature>
<feature type="binding site" evidence="1">
    <location>
        <position position="86"/>
    </location>
    <ligand>
        <name>N(1)-(5-phospho-beta-D-ribosyl)glycinamide</name>
        <dbReference type="ChEBI" id="CHEBI:143788"/>
    </ligand>
</feature>
<feature type="binding site" evidence="1">
    <location>
        <position position="118"/>
    </location>
    <ligand>
        <name>ATP</name>
        <dbReference type="ChEBI" id="CHEBI:30616"/>
    </ligand>
</feature>
<feature type="binding site" evidence="1">
    <location>
        <position position="159"/>
    </location>
    <ligand>
        <name>ATP</name>
        <dbReference type="ChEBI" id="CHEBI:30616"/>
    </ligand>
</feature>
<feature type="binding site" evidence="1">
    <location>
        <begin position="199"/>
        <end position="202"/>
    </location>
    <ligand>
        <name>ATP</name>
        <dbReference type="ChEBI" id="CHEBI:30616"/>
    </ligand>
</feature>
<feature type="binding site" evidence="1">
    <location>
        <position position="207"/>
    </location>
    <ligand>
        <name>ATP</name>
        <dbReference type="ChEBI" id="CHEBI:30616"/>
    </ligand>
</feature>
<feature type="binding site" evidence="1">
    <location>
        <position position="276"/>
    </location>
    <ligand>
        <name>Mg(2+)</name>
        <dbReference type="ChEBI" id="CHEBI:18420"/>
    </ligand>
</feature>
<feature type="binding site" evidence="1">
    <location>
        <position position="288"/>
    </location>
    <ligand>
        <name>Mg(2+)</name>
        <dbReference type="ChEBI" id="CHEBI:18420"/>
    </ligand>
</feature>
<feature type="binding site" evidence="1">
    <location>
        <position position="295"/>
    </location>
    <ligand>
        <name>N(1)-(5-phospho-beta-D-ribosyl)glycinamide</name>
        <dbReference type="ChEBI" id="CHEBI:143788"/>
    </ligand>
</feature>
<feature type="binding site" evidence="1">
    <location>
        <position position="375"/>
    </location>
    <ligand>
        <name>N(1)-(5-phospho-beta-D-ribosyl)glycinamide</name>
        <dbReference type="ChEBI" id="CHEBI:143788"/>
    </ligand>
</feature>
<feature type="binding site" evidence="1">
    <location>
        <begin position="382"/>
        <end position="383"/>
    </location>
    <ligand>
        <name>N(1)-(5-phospho-beta-D-ribosyl)glycinamide</name>
        <dbReference type="ChEBI" id="CHEBI:143788"/>
    </ligand>
</feature>
<keyword id="KW-0067">ATP-binding</keyword>
<keyword id="KW-0436">Ligase</keyword>
<keyword id="KW-0460">Magnesium</keyword>
<keyword id="KW-0479">Metal-binding</keyword>
<keyword id="KW-0547">Nucleotide-binding</keyword>
<keyword id="KW-0658">Purine biosynthesis</keyword>
<keyword id="KW-1185">Reference proteome</keyword>